<name>Y343_STRPJ</name>
<feature type="chain" id="PRO_1000185587" description="UPF0398 protein SPN23F03430">
    <location>
        <begin position="1"/>
        <end position="175"/>
    </location>
</feature>
<proteinExistence type="inferred from homology"/>
<protein>
    <recommendedName>
        <fullName evidence="1">UPF0398 protein SPN23F03430</fullName>
    </recommendedName>
</protein>
<sequence>MATALVLGYSAFDLGLFSDKDPRLKLIKKAIRKDLEAMAADGVSWLVFTGSLGFEYWVLEVAQEMKTEYGFQLATIFAFETHGENWNEGNQMKLSRFKQVDFVKYAYPRYEHKGQLRDYQQFLLENTTSSYLFYDEENETKLAYFYQKMKNQEDYFIKRLTFDQLNELAENFSEN</sequence>
<dbReference type="EMBL" id="FM211187">
    <property type="protein sequence ID" value="CAR68198.1"/>
    <property type="molecule type" value="Genomic_DNA"/>
</dbReference>
<dbReference type="RefSeq" id="WP_000179549.1">
    <property type="nucleotide sequence ID" value="NC_011900.1"/>
</dbReference>
<dbReference type="SMR" id="B8ZL83"/>
<dbReference type="KEGG" id="sne:SPN23F03430"/>
<dbReference type="HOGENOM" id="CLU_105319_0_0_9"/>
<dbReference type="Gene3D" id="3.40.50.450">
    <property type="match status" value="1"/>
</dbReference>
<dbReference type="HAMAP" id="MF_01575">
    <property type="entry name" value="UPF0398"/>
    <property type="match status" value="1"/>
</dbReference>
<dbReference type="InterPro" id="IPR010697">
    <property type="entry name" value="YspA"/>
</dbReference>
<dbReference type="NCBIfam" id="NF010181">
    <property type="entry name" value="PRK13660.1"/>
    <property type="match status" value="1"/>
</dbReference>
<dbReference type="PANTHER" id="PTHR38440:SF1">
    <property type="entry name" value="UPF0398 PROTEIN SPR0331"/>
    <property type="match status" value="1"/>
</dbReference>
<dbReference type="PANTHER" id="PTHR38440">
    <property type="entry name" value="UPF0398 PROTEIN YPSA"/>
    <property type="match status" value="1"/>
</dbReference>
<dbReference type="Pfam" id="PF06908">
    <property type="entry name" value="YpsA"/>
    <property type="match status" value="1"/>
</dbReference>
<dbReference type="PIRSF" id="PIRSF021290">
    <property type="entry name" value="DUF1273"/>
    <property type="match status" value="1"/>
</dbReference>
<dbReference type="SUPFAM" id="SSF102405">
    <property type="entry name" value="MCP/YpsA-like"/>
    <property type="match status" value="1"/>
</dbReference>
<accession>B8ZL83</accession>
<comment type="similarity">
    <text evidence="1">Belongs to the UPF0398 family.</text>
</comment>
<reference key="1">
    <citation type="journal article" date="2009" name="J. Bacteriol.">
        <title>Role of conjugative elements in the evolution of the multidrug-resistant pandemic clone Streptococcus pneumoniae Spain23F ST81.</title>
        <authorList>
            <person name="Croucher N.J."/>
            <person name="Walker D."/>
            <person name="Romero P."/>
            <person name="Lennard N."/>
            <person name="Paterson G.K."/>
            <person name="Bason N.C."/>
            <person name="Mitchell A.M."/>
            <person name="Quail M.A."/>
            <person name="Andrew P.W."/>
            <person name="Parkhill J."/>
            <person name="Bentley S.D."/>
            <person name="Mitchell T.J."/>
        </authorList>
    </citation>
    <scope>NUCLEOTIDE SEQUENCE [LARGE SCALE GENOMIC DNA]</scope>
    <source>
        <strain>ATCC 700669 / Spain 23F-1</strain>
    </source>
</reference>
<organism>
    <name type="scientific">Streptococcus pneumoniae (strain ATCC 700669 / Spain 23F-1)</name>
    <dbReference type="NCBI Taxonomy" id="561276"/>
    <lineage>
        <taxon>Bacteria</taxon>
        <taxon>Bacillati</taxon>
        <taxon>Bacillota</taxon>
        <taxon>Bacilli</taxon>
        <taxon>Lactobacillales</taxon>
        <taxon>Streptococcaceae</taxon>
        <taxon>Streptococcus</taxon>
    </lineage>
</organism>
<evidence type="ECO:0000255" key="1">
    <source>
        <dbReference type="HAMAP-Rule" id="MF_01575"/>
    </source>
</evidence>
<gene>
    <name type="ordered locus">SPN23F03430</name>
</gene>